<sequence length="353" mass="38965">MTAILERRDSETLWGRFCNWITSTENRLYIGWFGVLMIPTLLTATSVFIIAFIAAPPVDIDGIREPVSGSLLYGNNIICGAIIPTSAAIGLHFYPIWEAASVDEWLYNGGPYELIVLHFLLGVACYMGREWELSFRLGMRPWIAVAYSAPVAAATAVFLIYPIGQGSFSDGMPLGISGTFNFMIVFQAEHNILMHPFHMLGVAGVFGGSLFSAMHGSLVTSSLIRETTENESANEGYRFGQEEETYNIVAAHGYFGRLIFQYASFNNSRSLHFFLAAWPVVGIWFTALGISTMAFNLNGFNFNQSVVDSQGRVINTWADIINRANLGMEVMHERNAHNFPLDLAAVEAPSING</sequence>
<geneLocation type="chloroplast"/>
<reference key="1">
    <citation type="journal article" date="1986" name="Nucleic Acids Res.">
        <title>Sequence of the chloroplast-encoded psbA gene for the QB polypeptide of alfalfa.</title>
        <authorList>
            <person name="Aldrich J."/>
            <person name="Cherney B."/>
            <person name="Merlin E."/>
        </authorList>
    </citation>
    <scope>NUCLEOTIDE SEQUENCE [GENOMIC DNA]</scope>
    <source>
        <strain>cv. Regen S</strain>
    </source>
</reference>
<protein>
    <recommendedName>
        <fullName evidence="1">Photosystem II protein D1</fullName>
        <shortName evidence="1">PSII D1 protein</shortName>
        <ecNumber evidence="1">1.10.3.9</ecNumber>
    </recommendedName>
    <alternativeName>
        <fullName evidence="1">Photosystem II Q(B) protein</fullName>
    </alternativeName>
</protein>
<organism>
    <name type="scientific">Medicago sativa</name>
    <name type="common">Alfalfa</name>
    <dbReference type="NCBI Taxonomy" id="3879"/>
    <lineage>
        <taxon>Eukaryota</taxon>
        <taxon>Viridiplantae</taxon>
        <taxon>Streptophyta</taxon>
        <taxon>Embryophyta</taxon>
        <taxon>Tracheophyta</taxon>
        <taxon>Spermatophyta</taxon>
        <taxon>Magnoliopsida</taxon>
        <taxon>eudicotyledons</taxon>
        <taxon>Gunneridae</taxon>
        <taxon>Pentapetalae</taxon>
        <taxon>rosids</taxon>
        <taxon>fabids</taxon>
        <taxon>Fabales</taxon>
        <taxon>Fabaceae</taxon>
        <taxon>Papilionoideae</taxon>
        <taxon>50 kb inversion clade</taxon>
        <taxon>NPAAA clade</taxon>
        <taxon>Hologalegina</taxon>
        <taxon>IRL clade</taxon>
        <taxon>Trifolieae</taxon>
        <taxon>Medicago</taxon>
    </lineage>
</organism>
<gene>
    <name evidence="1" type="primary">psbA</name>
</gene>
<comment type="function">
    <text evidence="1">Photosystem II (PSII) is a light-driven water:plastoquinone oxidoreductase that uses light energy to abstract electrons from H(2)O, generating O(2) and a proton gradient subsequently used for ATP formation. It consists of a core antenna complex that captures photons, and an electron transfer chain that converts photonic excitation into a charge separation. The D1/D2 (PsbA/PsbD) reaction center heterodimer binds P680, the primary electron donor of PSII as well as several subsequent electron acceptors.</text>
</comment>
<comment type="catalytic activity">
    <reaction evidence="1">
        <text>2 a plastoquinone + 4 hnu + 2 H2O = 2 a plastoquinol + O2</text>
        <dbReference type="Rhea" id="RHEA:36359"/>
        <dbReference type="Rhea" id="RHEA-COMP:9561"/>
        <dbReference type="Rhea" id="RHEA-COMP:9562"/>
        <dbReference type="ChEBI" id="CHEBI:15377"/>
        <dbReference type="ChEBI" id="CHEBI:15379"/>
        <dbReference type="ChEBI" id="CHEBI:17757"/>
        <dbReference type="ChEBI" id="CHEBI:30212"/>
        <dbReference type="ChEBI" id="CHEBI:62192"/>
        <dbReference type="EC" id="1.10.3.9"/>
    </reaction>
</comment>
<comment type="cofactor">
    <text evidence="1">The D1/D2 heterodimer binds P680, chlorophylls that are the primary electron donor of PSII, and subsequent electron acceptors. It shares a non-heme iron and each subunit binds pheophytin, quinone, additional chlorophylls, carotenoids and lipids. D1 provides most of the ligands for the Mn4-Ca-O5 cluster of the oxygen-evolving complex (OEC). There is also a Cl(-1) ion associated with D1 and D2, which is required for oxygen evolution. The PSII complex binds additional chlorophylls, carotenoids and specific lipids.</text>
</comment>
<comment type="subunit">
    <text evidence="1">PSII is composed of 1 copy each of membrane proteins PsbA, PsbB, PsbC, PsbD, PsbE, PsbF, PsbH, PsbI, PsbJ, PsbK, PsbL, PsbM, PsbT, PsbX, PsbY, PsbZ, Psb30/Ycf12, at least 3 peripheral proteins of the oxygen-evolving complex and a large number of cofactors. It forms dimeric complexes.</text>
</comment>
<comment type="subcellular location">
    <subcellularLocation>
        <location evidence="1">Plastid</location>
        <location evidence="1">Chloroplast thylakoid membrane</location>
        <topology evidence="1">Multi-pass membrane protein</topology>
    </subcellularLocation>
</comment>
<comment type="PTM">
    <text evidence="1">Tyr-161 forms a radical intermediate that is referred to as redox-active TyrZ, YZ or Y-Z.</text>
</comment>
<comment type="PTM">
    <text evidence="1">C-terminally processed by CTPA; processing is essential to allow assembly of the oxygen-evolving complex and thus photosynthetic growth.</text>
</comment>
<comment type="miscellaneous">
    <text evidence="1">2 of the reaction center chlorophylls (ChlD1 and ChlD2) are entirely coordinated by water.</text>
</comment>
<comment type="miscellaneous">
    <text evidence="1">Herbicides such as atrazine, BNT, diuron or ioxynil bind in the Q(B) binding site and block subsequent electron transfer.</text>
</comment>
<comment type="similarity">
    <text evidence="1">Belongs to the reaction center PufL/M/PsbA/D family.</text>
</comment>
<feature type="initiator methionine" description="Removed" evidence="1">
    <location>
        <position position="1"/>
    </location>
</feature>
<feature type="chain" id="PRO_0000090451" description="Photosystem II protein D1" evidence="1">
    <location>
        <begin position="2"/>
        <end position="344"/>
    </location>
</feature>
<feature type="propeptide" id="PRO_0000316461" evidence="1">
    <location>
        <begin position="345"/>
        <end position="353"/>
    </location>
</feature>
<feature type="transmembrane region" description="Helical" evidence="1">
    <location>
        <begin position="29"/>
        <end position="46"/>
    </location>
</feature>
<feature type="transmembrane region" description="Helical" evidence="1">
    <location>
        <begin position="118"/>
        <end position="133"/>
    </location>
</feature>
<feature type="transmembrane region" description="Helical" evidence="1">
    <location>
        <begin position="142"/>
        <end position="156"/>
    </location>
</feature>
<feature type="transmembrane region" description="Helical" evidence="1">
    <location>
        <begin position="197"/>
        <end position="218"/>
    </location>
</feature>
<feature type="transmembrane region" description="Helical" evidence="1">
    <location>
        <begin position="274"/>
        <end position="288"/>
    </location>
</feature>
<feature type="binding site" description="axial binding residue" evidence="1">
    <location>
        <position position="118"/>
    </location>
    <ligand>
        <name>chlorophyll a</name>
        <dbReference type="ChEBI" id="CHEBI:58416"/>
        <label>ChlzD1</label>
    </ligand>
    <ligandPart>
        <name>Mg</name>
        <dbReference type="ChEBI" id="CHEBI:25107"/>
    </ligandPart>
</feature>
<feature type="binding site" evidence="1">
    <location>
        <position position="126"/>
    </location>
    <ligand>
        <name>pheophytin a</name>
        <dbReference type="ChEBI" id="CHEBI:136840"/>
        <label>D1</label>
    </ligand>
</feature>
<feature type="binding site" evidence="1">
    <location>
        <position position="170"/>
    </location>
    <ligand>
        <name>[CaMn4O5] cluster</name>
        <dbReference type="ChEBI" id="CHEBI:189552"/>
    </ligand>
</feature>
<feature type="binding site" evidence="1">
    <location>
        <position position="189"/>
    </location>
    <ligand>
        <name>[CaMn4O5] cluster</name>
        <dbReference type="ChEBI" id="CHEBI:189552"/>
    </ligand>
</feature>
<feature type="binding site" description="axial binding residue" evidence="1">
    <location>
        <position position="198"/>
    </location>
    <ligand>
        <name>chlorophyll a</name>
        <dbReference type="ChEBI" id="CHEBI:58416"/>
        <label>PD1</label>
    </ligand>
    <ligandPart>
        <name>Mg</name>
        <dbReference type="ChEBI" id="CHEBI:25107"/>
    </ligandPart>
</feature>
<feature type="binding site" evidence="1">
    <location>
        <position position="215"/>
    </location>
    <ligand>
        <name>a quinone</name>
        <dbReference type="ChEBI" id="CHEBI:132124"/>
        <label>B</label>
    </ligand>
</feature>
<feature type="binding site" evidence="1">
    <location>
        <position position="215"/>
    </location>
    <ligand>
        <name>Fe cation</name>
        <dbReference type="ChEBI" id="CHEBI:24875"/>
        <note>ligand shared with heterodimeric partner</note>
    </ligand>
</feature>
<feature type="binding site" evidence="1">
    <location>
        <begin position="264"/>
        <end position="265"/>
    </location>
    <ligand>
        <name>a quinone</name>
        <dbReference type="ChEBI" id="CHEBI:132124"/>
        <label>B</label>
    </ligand>
</feature>
<feature type="binding site" evidence="1">
    <location>
        <position position="272"/>
    </location>
    <ligand>
        <name>Fe cation</name>
        <dbReference type="ChEBI" id="CHEBI:24875"/>
        <note>ligand shared with heterodimeric partner</note>
    </ligand>
</feature>
<feature type="binding site" evidence="1">
    <location>
        <position position="332"/>
    </location>
    <ligand>
        <name>[CaMn4O5] cluster</name>
        <dbReference type="ChEBI" id="CHEBI:189552"/>
    </ligand>
</feature>
<feature type="binding site" evidence="1">
    <location>
        <position position="333"/>
    </location>
    <ligand>
        <name>[CaMn4O5] cluster</name>
        <dbReference type="ChEBI" id="CHEBI:189552"/>
    </ligand>
</feature>
<feature type="binding site" evidence="1">
    <location>
        <position position="342"/>
    </location>
    <ligand>
        <name>[CaMn4O5] cluster</name>
        <dbReference type="ChEBI" id="CHEBI:189552"/>
    </ligand>
</feature>
<feature type="binding site" evidence="1">
    <location>
        <position position="344"/>
    </location>
    <ligand>
        <name>[CaMn4O5] cluster</name>
        <dbReference type="ChEBI" id="CHEBI:189552"/>
    </ligand>
</feature>
<feature type="site" description="Tyrosine radical intermediate" evidence="1">
    <location>
        <position position="161"/>
    </location>
</feature>
<feature type="site" description="Stabilizes free radical intermediate" evidence="1">
    <location>
        <position position="190"/>
    </location>
</feature>
<feature type="site" description="Cleavage; by CTPA" evidence="1">
    <location>
        <begin position="344"/>
        <end position="345"/>
    </location>
</feature>
<feature type="modified residue" description="N-acetylthreonine" evidence="1">
    <location>
        <position position="2"/>
    </location>
</feature>
<feature type="modified residue" description="Phosphothreonine" evidence="1">
    <location>
        <position position="2"/>
    </location>
</feature>
<proteinExistence type="inferred from homology"/>
<accession>P04998</accession>
<dbReference type="EC" id="1.10.3.9" evidence="1"/>
<dbReference type="EMBL" id="X04973">
    <property type="protein sequence ID" value="CAA28646.1"/>
    <property type="molecule type" value="Genomic_DNA"/>
</dbReference>
<dbReference type="PIR" id="A25580">
    <property type="entry name" value="A25580"/>
</dbReference>
<dbReference type="SMR" id="P04998"/>
<dbReference type="GO" id="GO:0009535">
    <property type="term" value="C:chloroplast thylakoid membrane"/>
    <property type="evidence" value="ECO:0007669"/>
    <property type="project" value="UniProtKB-SubCell"/>
</dbReference>
<dbReference type="GO" id="GO:0009523">
    <property type="term" value="C:photosystem II"/>
    <property type="evidence" value="ECO:0007669"/>
    <property type="project" value="UniProtKB-KW"/>
</dbReference>
<dbReference type="GO" id="GO:0016168">
    <property type="term" value="F:chlorophyll binding"/>
    <property type="evidence" value="ECO:0007669"/>
    <property type="project" value="UniProtKB-UniRule"/>
</dbReference>
<dbReference type="GO" id="GO:0045156">
    <property type="term" value="F:electron transporter, transferring electrons within the cyclic electron transport pathway of photosynthesis activity"/>
    <property type="evidence" value="ECO:0007669"/>
    <property type="project" value="InterPro"/>
</dbReference>
<dbReference type="GO" id="GO:0005506">
    <property type="term" value="F:iron ion binding"/>
    <property type="evidence" value="ECO:0007669"/>
    <property type="project" value="UniProtKB-UniRule"/>
</dbReference>
<dbReference type="GO" id="GO:0016682">
    <property type="term" value="F:oxidoreductase activity, acting on diphenols and related substances as donors, oxygen as acceptor"/>
    <property type="evidence" value="ECO:0007669"/>
    <property type="project" value="UniProtKB-UniRule"/>
</dbReference>
<dbReference type="GO" id="GO:0010242">
    <property type="term" value="F:oxygen evolving activity"/>
    <property type="evidence" value="ECO:0007669"/>
    <property type="project" value="UniProtKB-EC"/>
</dbReference>
<dbReference type="GO" id="GO:0009772">
    <property type="term" value="P:photosynthetic electron transport in photosystem II"/>
    <property type="evidence" value="ECO:0007669"/>
    <property type="project" value="InterPro"/>
</dbReference>
<dbReference type="GO" id="GO:0009635">
    <property type="term" value="P:response to herbicide"/>
    <property type="evidence" value="ECO:0007669"/>
    <property type="project" value="UniProtKB-KW"/>
</dbReference>
<dbReference type="CDD" id="cd09289">
    <property type="entry name" value="Photosystem-II_D1"/>
    <property type="match status" value="1"/>
</dbReference>
<dbReference type="FunFam" id="1.20.85.10:FF:000002">
    <property type="entry name" value="Photosystem II protein D1"/>
    <property type="match status" value="1"/>
</dbReference>
<dbReference type="Gene3D" id="1.20.85.10">
    <property type="entry name" value="Photosystem II protein D1-like"/>
    <property type="match status" value="1"/>
</dbReference>
<dbReference type="HAMAP" id="MF_01379">
    <property type="entry name" value="PSII_PsbA_D1"/>
    <property type="match status" value="1"/>
</dbReference>
<dbReference type="InterPro" id="IPR055266">
    <property type="entry name" value="D1/D2"/>
</dbReference>
<dbReference type="InterPro" id="IPR036854">
    <property type="entry name" value="Photo_II_D1/D2_sf"/>
</dbReference>
<dbReference type="InterPro" id="IPR000484">
    <property type="entry name" value="Photo_RC_L/M"/>
</dbReference>
<dbReference type="InterPro" id="IPR055265">
    <property type="entry name" value="Photo_RC_L/M_CS"/>
</dbReference>
<dbReference type="InterPro" id="IPR005867">
    <property type="entry name" value="PSII_D1"/>
</dbReference>
<dbReference type="NCBIfam" id="TIGR01151">
    <property type="entry name" value="psbA"/>
    <property type="match status" value="1"/>
</dbReference>
<dbReference type="PANTHER" id="PTHR33149:SF12">
    <property type="entry name" value="PHOTOSYSTEM II D2 PROTEIN"/>
    <property type="match status" value="1"/>
</dbReference>
<dbReference type="PANTHER" id="PTHR33149">
    <property type="entry name" value="PHOTOSYSTEM II PROTEIN D1"/>
    <property type="match status" value="1"/>
</dbReference>
<dbReference type="Pfam" id="PF00124">
    <property type="entry name" value="Photo_RC"/>
    <property type="match status" value="1"/>
</dbReference>
<dbReference type="PRINTS" id="PR00256">
    <property type="entry name" value="REACTNCENTRE"/>
</dbReference>
<dbReference type="SUPFAM" id="SSF81483">
    <property type="entry name" value="Bacterial photosystem II reaction centre, L and M subunits"/>
    <property type="match status" value="1"/>
</dbReference>
<dbReference type="PROSITE" id="PS00244">
    <property type="entry name" value="REACTION_CENTER"/>
    <property type="match status" value="1"/>
</dbReference>
<name>PSBA_MEDSA</name>
<evidence type="ECO:0000255" key="1">
    <source>
        <dbReference type="HAMAP-Rule" id="MF_01379"/>
    </source>
</evidence>
<keyword id="KW-0007">Acetylation</keyword>
<keyword id="KW-0106">Calcium</keyword>
<keyword id="KW-0148">Chlorophyll</keyword>
<keyword id="KW-0150">Chloroplast</keyword>
<keyword id="KW-0157">Chromophore</keyword>
<keyword id="KW-0249">Electron transport</keyword>
<keyword id="KW-0359">Herbicide resistance</keyword>
<keyword id="KW-0408">Iron</keyword>
<keyword id="KW-0460">Magnesium</keyword>
<keyword id="KW-0464">Manganese</keyword>
<keyword id="KW-0472">Membrane</keyword>
<keyword id="KW-0479">Metal-binding</keyword>
<keyword id="KW-0560">Oxidoreductase</keyword>
<keyword id="KW-0597">Phosphoprotein</keyword>
<keyword id="KW-0602">Photosynthesis</keyword>
<keyword id="KW-0604">Photosystem II</keyword>
<keyword id="KW-0934">Plastid</keyword>
<keyword id="KW-0793">Thylakoid</keyword>
<keyword id="KW-0812">Transmembrane</keyword>
<keyword id="KW-1133">Transmembrane helix</keyword>
<keyword id="KW-0813">Transport</keyword>